<dbReference type="EC" id="4.2.1.9" evidence="1"/>
<dbReference type="EMBL" id="CP001400">
    <property type="protein sequence ID" value="ACP38990.1"/>
    <property type="molecule type" value="Genomic_DNA"/>
</dbReference>
<dbReference type="RefSeq" id="WP_012712214.1">
    <property type="nucleotide sequence ID" value="NC_012588.1"/>
</dbReference>
<dbReference type="SMR" id="C3MS47"/>
<dbReference type="GeneID" id="84062538"/>
<dbReference type="KEGG" id="sia:M1425_2257"/>
<dbReference type="HOGENOM" id="CLU_014271_4_2_2"/>
<dbReference type="UniPathway" id="UPA00047">
    <property type="reaction ID" value="UER00057"/>
</dbReference>
<dbReference type="UniPathway" id="UPA00049">
    <property type="reaction ID" value="UER00061"/>
</dbReference>
<dbReference type="Proteomes" id="UP000001350">
    <property type="component" value="Chromosome"/>
</dbReference>
<dbReference type="GO" id="GO:0051537">
    <property type="term" value="F:2 iron, 2 sulfur cluster binding"/>
    <property type="evidence" value="ECO:0007669"/>
    <property type="project" value="UniProtKB-UniRule"/>
</dbReference>
<dbReference type="GO" id="GO:0004160">
    <property type="term" value="F:dihydroxy-acid dehydratase activity"/>
    <property type="evidence" value="ECO:0007669"/>
    <property type="project" value="UniProtKB-UniRule"/>
</dbReference>
<dbReference type="GO" id="GO:0000287">
    <property type="term" value="F:magnesium ion binding"/>
    <property type="evidence" value="ECO:0007669"/>
    <property type="project" value="UniProtKB-UniRule"/>
</dbReference>
<dbReference type="GO" id="GO:0009097">
    <property type="term" value="P:isoleucine biosynthetic process"/>
    <property type="evidence" value="ECO:0007669"/>
    <property type="project" value="UniProtKB-UniRule"/>
</dbReference>
<dbReference type="GO" id="GO:0009099">
    <property type="term" value="P:L-valine biosynthetic process"/>
    <property type="evidence" value="ECO:0007669"/>
    <property type="project" value="UniProtKB-UniRule"/>
</dbReference>
<dbReference type="FunFam" id="3.50.30.80:FF:000001">
    <property type="entry name" value="Dihydroxy-acid dehydratase"/>
    <property type="match status" value="1"/>
</dbReference>
<dbReference type="Gene3D" id="3.50.30.80">
    <property type="entry name" value="IlvD/EDD C-terminal domain-like"/>
    <property type="match status" value="1"/>
</dbReference>
<dbReference type="HAMAP" id="MF_00012">
    <property type="entry name" value="IlvD"/>
    <property type="match status" value="1"/>
</dbReference>
<dbReference type="InterPro" id="IPR050165">
    <property type="entry name" value="DHAD_IlvD/Edd"/>
</dbReference>
<dbReference type="InterPro" id="IPR042096">
    <property type="entry name" value="Dihydro-acid_dehy_C"/>
</dbReference>
<dbReference type="InterPro" id="IPR004404">
    <property type="entry name" value="DihydroxyA_deHydtase"/>
</dbReference>
<dbReference type="InterPro" id="IPR020558">
    <property type="entry name" value="DiOHA_6PGluconate_deHydtase_CS"/>
</dbReference>
<dbReference type="InterPro" id="IPR056740">
    <property type="entry name" value="ILV_EDD_C"/>
</dbReference>
<dbReference type="InterPro" id="IPR000581">
    <property type="entry name" value="ILV_EDD_N"/>
</dbReference>
<dbReference type="InterPro" id="IPR037237">
    <property type="entry name" value="IlvD/EDD_N"/>
</dbReference>
<dbReference type="NCBIfam" id="TIGR00110">
    <property type="entry name" value="ilvD"/>
    <property type="match status" value="1"/>
</dbReference>
<dbReference type="NCBIfam" id="NF002068">
    <property type="entry name" value="PRK00911.1"/>
    <property type="match status" value="1"/>
</dbReference>
<dbReference type="PANTHER" id="PTHR21000">
    <property type="entry name" value="DIHYDROXY-ACID DEHYDRATASE DAD"/>
    <property type="match status" value="1"/>
</dbReference>
<dbReference type="PANTHER" id="PTHR21000:SF5">
    <property type="entry name" value="DIHYDROXY-ACID DEHYDRATASE, MITOCHONDRIAL"/>
    <property type="match status" value="1"/>
</dbReference>
<dbReference type="Pfam" id="PF24877">
    <property type="entry name" value="ILV_EDD_C"/>
    <property type="match status" value="1"/>
</dbReference>
<dbReference type="Pfam" id="PF00920">
    <property type="entry name" value="ILVD_EDD_N"/>
    <property type="match status" value="1"/>
</dbReference>
<dbReference type="SUPFAM" id="SSF143975">
    <property type="entry name" value="IlvD/EDD N-terminal domain-like"/>
    <property type="match status" value="1"/>
</dbReference>
<dbReference type="SUPFAM" id="SSF52016">
    <property type="entry name" value="LeuD/IlvD-like"/>
    <property type="match status" value="1"/>
</dbReference>
<dbReference type="PROSITE" id="PS00886">
    <property type="entry name" value="ILVD_EDD_1"/>
    <property type="match status" value="1"/>
</dbReference>
<dbReference type="PROSITE" id="PS00887">
    <property type="entry name" value="ILVD_EDD_2"/>
    <property type="match status" value="1"/>
</dbReference>
<keyword id="KW-0001">2Fe-2S</keyword>
<keyword id="KW-0028">Amino-acid biosynthesis</keyword>
<keyword id="KW-0100">Branched-chain amino acid biosynthesis</keyword>
<keyword id="KW-0408">Iron</keyword>
<keyword id="KW-0411">Iron-sulfur</keyword>
<keyword id="KW-0456">Lyase</keyword>
<keyword id="KW-0460">Magnesium</keyword>
<keyword id="KW-0479">Metal-binding</keyword>
<feature type="chain" id="PRO_1000201786" description="Dihydroxy-acid dehydratase">
    <location>
        <begin position="1"/>
        <end position="558"/>
    </location>
</feature>
<feature type="active site" description="Proton acceptor" evidence="1">
    <location>
        <position position="472"/>
    </location>
</feature>
<feature type="binding site" evidence="1">
    <location>
        <position position="50"/>
    </location>
    <ligand>
        <name>[2Fe-2S] cluster</name>
        <dbReference type="ChEBI" id="CHEBI:190135"/>
    </ligand>
</feature>
<feature type="binding site" evidence="1">
    <location>
        <position position="82"/>
    </location>
    <ligand>
        <name>Mg(2+)</name>
        <dbReference type="ChEBI" id="CHEBI:18420"/>
    </ligand>
</feature>
<feature type="binding site" evidence="1">
    <location>
        <position position="123"/>
    </location>
    <ligand>
        <name>[2Fe-2S] cluster</name>
        <dbReference type="ChEBI" id="CHEBI:190135"/>
    </ligand>
</feature>
<feature type="binding site" evidence="1">
    <location>
        <position position="124"/>
    </location>
    <ligand>
        <name>Mg(2+)</name>
        <dbReference type="ChEBI" id="CHEBI:18420"/>
    </ligand>
</feature>
<feature type="binding site" description="via carbamate group" evidence="1">
    <location>
        <position position="125"/>
    </location>
    <ligand>
        <name>Mg(2+)</name>
        <dbReference type="ChEBI" id="CHEBI:18420"/>
    </ligand>
</feature>
<feature type="binding site" evidence="1">
    <location>
        <position position="195"/>
    </location>
    <ligand>
        <name>[2Fe-2S] cluster</name>
        <dbReference type="ChEBI" id="CHEBI:190135"/>
    </ligand>
</feature>
<feature type="binding site" evidence="1">
    <location>
        <position position="447"/>
    </location>
    <ligand>
        <name>Mg(2+)</name>
        <dbReference type="ChEBI" id="CHEBI:18420"/>
    </ligand>
</feature>
<feature type="modified residue" description="N6-carboxylysine" evidence="1">
    <location>
        <position position="125"/>
    </location>
</feature>
<name>ILVD_SACI4</name>
<evidence type="ECO:0000255" key="1">
    <source>
        <dbReference type="HAMAP-Rule" id="MF_00012"/>
    </source>
</evidence>
<reference key="1">
    <citation type="journal article" date="2009" name="Proc. Natl. Acad. Sci. U.S.A.">
        <title>Biogeography of the Sulfolobus islandicus pan-genome.</title>
        <authorList>
            <person name="Reno M.L."/>
            <person name="Held N.L."/>
            <person name="Fields C.J."/>
            <person name="Burke P.V."/>
            <person name="Whitaker R.J."/>
        </authorList>
    </citation>
    <scope>NUCLEOTIDE SEQUENCE [LARGE SCALE GENOMIC DNA]</scope>
    <source>
        <strain>M.14.25 / Kamchatka #1</strain>
    </source>
</reference>
<organism>
    <name type="scientific">Saccharolobus islandicus (strain M.14.25 / Kamchatka #1)</name>
    <name type="common">Sulfolobus islandicus</name>
    <dbReference type="NCBI Taxonomy" id="427317"/>
    <lineage>
        <taxon>Archaea</taxon>
        <taxon>Thermoproteota</taxon>
        <taxon>Thermoprotei</taxon>
        <taxon>Sulfolobales</taxon>
        <taxon>Sulfolobaceae</taxon>
        <taxon>Saccharolobus</taxon>
    </lineage>
</organism>
<accession>C3MS47</accession>
<gene>
    <name evidence="1" type="primary">ilvD</name>
    <name type="ordered locus">M1425_2257</name>
</gene>
<sequence length="558" mass="59505">MPAKLNSPSRYHGIYNAPHRAFLRSVGLTDEEIGKPLVAIATAWSEAGPCNFHTLALARVAKEGTKEAGLSPLAFPTMVVNDNIGMGSEGMRYSLVSRDLIADMVEAQFNAHAFDGLVGIGGCDKTTPGILMAMARLNVPSIYIYGGSAEPGYFMGKRLTIEDVHEAIGAYLAKRITENELYEIEKRAHPTLGTCSGLFTANTMGSMSEALGMALPGSASPTATSSRRVMYVRETGKALGSLIENGIKSRDILTFEAFENAITTLMAMGGSTNAVLHLLAIAYEAGVKLTLDDFNRISKRTPYIASMKPGGDYVMADLDEVGGVPVVLKKLLDAGLLHGDVLTVTGKTMKQNLEQYKYPNVPHSHIVRDVKNPIKPRGGIVILKGSLAPEGAVIKVAATNVVKFEGKAKVYNSEDDAFKGVQSGEVREGEVVIIRYEGPKGAPGMPEMLRVTAAIMGAGLNNVALVTDGRFSGATRGPMVGHVAPEAMVGGPIAIVEDGDTIVIDVESERLDLKLSEEEIKNRLKRWSPPSPRYKSGLLAKYASLVSQASMGAVTRPA</sequence>
<proteinExistence type="inferred from homology"/>
<comment type="function">
    <text evidence="1">Functions in the biosynthesis of branched-chain amino acids. Catalyzes the dehydration of (2R,3R)-2,3-dihydroxy-3-methylpentanoate (2,3-dihydroxy-3-methylvalerate) into 2-oxo-3-methylpentanoate (2-oxo-3-methylvalerate) and of (2R)-2,3-dihydroxy-3-methylbutanoate (2,3-dihydroxyisovalerate) into 2-oxo-3-methylbutanoate (2-oxoisovalerate), the penultimate precursor to L-isoleucine and L-valine, respectively.</text>
</comment>
<comment type="catalytic activity">
    <reaction evidence="1">
        <text>(2R)-2,3-dihydroxy-3-methylbutanoate = 3-methyl-2-oxobutanoate + H2O</text>
        <dbReference type="Rhea" id="RHEA:24809"/>
        <dbReference type="ChEBI" id="CHEBI:11851"/>
        <dbReference type="ChEBI" id="CHEBI:15377"/>
        <dbReference type="ChEBI" id="CHEBI:49072"/>
        <dbReference type="EC" id="4.2.1.9"/>
    </reaction>
    <physiologicalReaction direction="left-to-right" evidence="1">
        <dbReference type="Rhea" id="RHEA:24810"/>
    </physiologicalReaction>
</comment>
<comment type="catalytic activity">
    <reaction evidence="1">
        <text>(2R,3R)-2,3-dihydroxy-3-methylpentanoate = (S)-3-methyl-2-oxopentanoate + H2O</text>
        <dbReference type="Rhea" id="RHEA:27694"/>
        <dbReference type="ChEBI" id="CHEBI:15377"/>
        <dbReference type="ChEBI" id="CHEBI:35146"/>
        <dbReference type="ChEBI" id="CHEBI:49258"/>
        <dbReference type="EC" id="4.2.1.9"/>
    </reaction>
    <physiologicalReaction direction="left-to-right" evidence="1">
        <dbReference type="Rhea" id="RHEA:27695"/>
    </physiologicalReaction>
</comment>
<comment type="cofactor">
    <cofactor evidence="1">
        <name>[2Fe-2S] cluster</name>
        <dbReference type="ChEBI" id="CHEBI:190135"/>
    </cofactor>
    <text evidence="1">Binds 1 [2Fe-2S] cluster per subunit. This cluster acts as a Lewis acid cofactor.</text>
</comment>
<comment type="cofactor">
    <cofactor evidence="1">
        <name>Mg(2+)</name>
        <dbReference type="ChEBI" id="CHEBI:18420"/>
    </cofactor>
</comment>
<comment type="pathway">
    <text evidence="1">Amino-acid biosynthesis; L-isoleucine biosynthesis; L-isoleucine from 2-oxobutanoate: step 3/4.</text>
</comment>
<comment type="pathway">
    <text evidence="1">Amino-acid biosynthesis; L-valine biosynthesis; L-valine from pyruvate: step 3/4.</text>
</comment>
<comment type="subunit">
    <text evidence="1">Homodimer.</text>
</comment>
<comment type="similarity">
    <text evidence="1">Belongs to the IlvD/Edd family.</text>
</comment>
<protein>
    <recommendedName>
        <fullName evidence="1">Dihydroxy-acid dehydratase</fullName>
        <shortName evidence="1">DAD</shortName>
        <ecNumber evidence="1">4.2.1.9</ecNumber>
    </recommendedName>
</protein>